<organism>
    <name type="scientific">Canis lupus familiaris</name>
    <name type="common">Dog</name>
    <name type="synonym">Canis familiaris</name>
    <dbReference type="NCBI Taxonomy" id="9615"/>
    <lineage>
        <taxon>Eukaryota</taxon>
        <taxon>Metazoa</taxon>
        <taxon>Chordata</taxon>
        <taxon>Craniata</taxon>
        <taxon>Vertebrata</taxon>
        <taxon>Euteleostomi</taxon>
        <taxon>Mammalia</taxon>
        <taxon>Eutheria</taxon>
        <taxon>Laurasiatheria</taxon>
        <taxon>Carnivora</taxon>
        <taxon>Caniformia</taxon>
        <taxon>Canidae</taxon>
        <taxon>Canis</taxon>
    </lineage>
</organism>
<comment type="function">
    <text evidence="1">Transcriptional regulator that binds the cAMP response element (CRE), a sequence present in many viral and cellular promoters. Isoforms are either transcriptional activators or repressors. Isoform Tau is a transcriptional activator. Plays a role in spermatogenesis and is involved in spermatid maturation (By similarity).</text>
</comment>
<comment type="subunit">
    <text evidence="2 4">Binds DNA as a dimer. Interacts with FHL5. Interacts with CDC34. May interact with TSSK4.</text>
</comment>
<comment type="subcellular location">
    <subcellularLocation>
        <location>Nucleus</location>
    </subcellularLocation>
</comment>
<comment type="alternative products">
    <event type="alternative splicing"/>
    <isoform>
        <id>P79145-1</id>
        <name>Tau</name>
        <sequence type="displayed"/>
    </isoform>
    <isoform>
        <id>P79145-2</id>
        <name>Alpha</name>
        <sequence type="not described"/>
    </isoform>
    <isoform>
        <id>P79145-3</id>
        <name>Beta</name>
        <sequence type="not described"/>
    </isoform>
    <isoform>
        <id>P79145-4</id>
        <name>Gamma</name>
        <sequence type="not described"/>
    </isoform>
    <text>Additional isoforms seem to exist.</text>
</comment>
<comment type="PTM">
    <text evidence="2 3">Stimulated by phosphorylation. Phosphorylated on Ser-118 by TSSK4 in vitro.</text>
</comment>
<comment type="similarity">
    <text evidence="8">Belongs to the bZIP family.</text>
</comment>
<feature type="chain" id="PRO_0000076606" description="cAMP-responsive element modulator">
    <location>
        <begin position="1"/>
        <end position="360"/>
    </location>
</feature>
<feature type="domain" description="KID" evidence="5">
    <location>
        <begin position="104"/>
        <end position="163"/>
    </location>
</feature>
<feature type="domain" description="bZIP" evidence="6">
    <location>
        <begin position="302"/>
        <end position="360"/>
    </location>
</feature>
<feature type="region of interest" description="Disordered" evidence="7">
    <location>
        <begin position="20"/>
        <end position="52"/>
    </location>
</feature>
<feature type="region of interest" description="Basic motif" evidence="6">
    <location>
        <begin position="303"/>
        <end position="328"/>
    </location>
</feature>
<feature type="region of interest" description="Leucine-zipper" evidence="6">
    <location>
        <begin position="330"/>
        <end position="351"/>
    </location>
</feature>
<feature type="modified residue" description="Phosphoserine" evidence="2">
    <location>
        <position position="118"/>
    </location>
</feature>
<feature type="modified residue" description="Phosphoserine" evidence="4">
    <location>
        <position position="145"/>
    </location>
</feature>
<feature type="modified residue" description="Phosphoserine" evidence="4 5">
    <location>
        <position position="287"/>
    </location>
</feature>
<feature type="modified residue" description="Phosphoserine" evidence="4 5">
    <location>
        <position position="290"/>
    </location>
</feature>
<feature type="modified residue" description="Phosphoserine" evidence="4 5">
    <location>
        <position position="293"/>
    </location>
</feature>
<feature type="sequence conflict" description="In Ref. 1; DN354960." evidence="8" ref="1">
    <original>R</original>
    <variation>K</variation>
    <location>
        <position position="128"/>
    </location>
</feature>
<dbReference type="EMBL" id="DN354960">
    <property type="status" value="NOT_ANNOTATED_CDS"/>
    <property type="molecule type" value="mRNA"/>
</dbReference>
<dbReference type="EMBL" id="X99115">
    <property type="protein sequence ID" value="CAA67563.1"/>
    <property type="molecule type" value="mRNA"/>
</dbReference>
<dbReference type="PIR" id="JC5601">
    <property type="entry name" value="JC5601"/>
</dbReference>
<dbReference type="PIR" id="JC5602">
    <property type="entry name" value="JC5602"/>
</dbReference>
<dbReference type="RefSeq" id="NP_001003221.1">
    <property type="nucleotide sequence ID" value="NM_001003221.1"/>
</dbReference>
<dbReference type="RefSeq" id="XP_005616964.1">
    <property type="nucleotide sequence ID" value="XM_005616907.2"/>
</dbReference>
<dbReference type="RefSeq" id="XP_013976471.1">
    <property type="nucleotide sequence ID" value="XM_014120996.1"/>
</dbReference>
<dbReference type="RefSeq" id="XP_038513656.1">
    <molecule id="P79145-1"/>
    <property type="nucleotide sequence ID" value="XM_038657728.1"/>
</dbReference>
<dbReference type="SMR" id="P79145"/>
<dbReference type="FunCoup" id="P79145">
    <property type="interactions" value="998"/>
</dbReference>
<dbReference type="STRING" id="9615.ENSCAFP00000005495"/>
<dbReference type="PaxDb" id="9612-ENSCAFP00000005495"/>
<dbReference type="Ensembl" id="ENSCAFT00000005931.6">
    <molecule id="P79145-1"/>
    <property type="protein sequence ID" value="ENSCAFP00000005495.3"/>
    <property type="gene ID" value="ENSCAFG00000003685.6"/>
</dbReference>
<dbReference type="Ensembl" id="ENSCAFT00030006201.1">
    <molecule id="P79145-1"/>
    <property type="protein sequence ID" value="ENSCAFP00030005462.1"/>
    <property type="gene ID" value="ENSCAFG00030002923.1"/>
</dbReference>
<dbReference type="Ensembl" id="ENSCAFT00040001416.1">
    <molecule id="P79145-1"/>
    <property type="protein sequence ID" value="ENSCAFP00040001208.1"/>
    <property type="gene ID" value="ENSCAFG00040000475.1"/>
</dbReference>
<dbReference type="Ensembl" id="ENSCAFT00845003241.1">
    <molecule id="P79145-1"/>
    <property type="protein sequence ID" value="ENSCAFP00845002571.1"/>
    <property type="gene ID" value="ENSCAFG00845001664.1"/>
</dbReference>
<dbReference type="GeneID" id="403887"/>
<dbReference type="KEGG" id="cfa:403887"/>
<dbReference type="CTD" id="1390"/>
<dbReference type="VEuPathDB" id="HostDB:ENSCAFG00845001664"/>
<dbReference type="eggNOG" id="KOG3584">
    <property type="taxonomic scope" value="Eukaryota"/>
</dbReference>
<dbReference type="GeneTree" id="ENSGT00940000156952"/>
<dbReference type="HOGENOM" id="CLU_042675_0_1_1"/>
<dbReference type="InParanoid" id="P79145"/>
<dbReference type="OMA" id="HEKTTER"/>
<dbReference type="OrthoDB" id="5970722at2759"/>
<dbReference type="TreeFam" id="TF106464"/>
<dbReference type="Proteomes" id="UP000002254">
    <property type="component" value="Chromosome 2"/>
</dbReference>
<dbReference type="Proteomes" id="UP000694429">
    <property type="component" value="Chromosome 2"/>
</dbReference>
<dbReference type="Proteomes" id="UP000694542">
    <property type="component" value="Chromosome 2"/>
</dbReference>
<dbReference type="Proteomes" id="UP000805418">
    <property type="component" value="Chromosome 2"/>
</dbReference>
<dbReference type="Bgee" id="ENSCAFG00000003685">
    <property type="expression patterns" value="Expressed in granulocyte and 48 other cell types or tissues"/>
</dbReference>
<dbReference type="GO" id="GO:1990589">
    <property type="term" value="C:ATF4-CREB1 transcription factor complex"/>
    <property type="evidence" value="ECO:0000318"/>
    <property type="project" value="GO_Central"/>
</dbReference>
<dbReference type="GO" id="GO:0000981">
    <property type="term" value="F:DNA-binding transcription factor activity, RNA polymerase II-specific"/>
    <property type="evidence" value="ECO:0000318"/>
    <property type="project" value="GO_Central"/>
</dbReference>
<dbReference type="GO" id="GO:0001227">
    <property type="term" value="F:DNA-binding transcription repressor activity, RNA polymerase II-specific"/>
    <property type="evidence" value="ECO:0007669"/>
    <property type="project" value="Ensembl"/>
</dbReference>
<dbReference type="GO" id="GO:0000978">
    <property type="term" value="F:RNA polymerase II cis-regulatory region sequence-specific DNA binding"/>
    <property type="evidence" value="ECO:0000318"/>
    <property type="project" value="GO_Central"/>
</dbReference>
<dbReference type="GO" id="GO:0006357">
    <property type="term" value="P:regulation of transcription by RNA polymerase II"/>
    <property type="evidence" value="ECO:0000318"/>
    <property type="project" value="GO_Central"/>
</dbReference>
<dbReference type="CDD" id="cd14690">
    <property type="entry name" value="bZIP_CREB1"/>
    <property type="match status" value="1"/>
</dbReference>
<dbReference type="FunFam" id="1.20.5.170:FF:000003">
    <property type="entry name" value="cAMP-responsive element modulator isoform X2"/>
    <property type="match status" value="1"/>
</dbReference>
<dbReference type="Gene3D" id="1.20.5.170">
    <property type="match status" value="1"/>
</dbReference>
<dbReference type="InterPro" id="IPR004827">
    <property type="entry name" value="bZIP"/>
</dbReference>
<dbReference type="InterPro" id="IPR046347">
    <property type="entry name" value="bZIP_sf"/>
</dbReference>
<dbReference type="InterPro" id="IPR003102">
    <property type="entry name" value="CREB1-like_pKID"/>
</dbReference>
<dbReference type="InterPro" id="IPR001630">
    <property type="entry name" value="Leuzip_CREB"/>
</dbReference>
<dbReference type="PANTHER" id="PTHR45879:SF4">
    <property type="entry name" value="CAMP-RESPONSIVE ELEMENT MODULATOR"/>
    <property type="match status" value="1"/>
</dbReference>
<dbReference type="PANTHER" id="PTHR45879">
    <property type="entry name" value="CYCLIC AMP RESPONSE ELEMENT-BINDING PROTEIN B"/>
    <property type="match status" value="1"/>
</dbReference>
<dbReference type="Pfam" id="PF00170">
    <property type="entry name" value="bZIP_1"/>
    <property type="match status" value="1"/>
</dbReference>
<dbReference type="Pfam" id="PF02173">
    <property type="entry name" value="pKID"/>
    <property type="match status" value="1"/>
</dbReference>
<dbReference type="PRINTS" id="PR00041">
    <property type="entry name" value="LEUZIPPRCREB"/>
</dbReference>
<dbReference type="SMART" id="SM00338">
    <property type="entry name" value="BRLZ"/>
    <property type="match status" value="1"/>
</dbReference>
<dbReference type="SUPFAM" id="SSF57959">
    <property type="entry name" value="Leucine zipper domain"/>
    <property type="match status" value="1"/>
</dbReference>
<dbReference type="PROSITE" id="PS50217">
    <property type="entry name" value="BZIP"/>
    <property type="match status" value="1"/>
</dbReference>
<dbReference type="PROSITE" id="PS00036">
    <property type="entry name" value="BZIP_BASIC"/>
    <property type="match status" value="1"/>
</dbReference>
<dbReference type="PROSITE" id="PS50953">
    <property type="entry name" value="KID"/>
    <property type="match status" value="1"/>
</dbReference>
<keyword id="KW-0010">Activator</keyword>
<keyword id="KW-0025">Alternative splicing</keyword>
<keyword id="KW-0238">DNA-binding</keyword>
<keyword id="KW-0539">Nucleus</keyword>
<keyword id="KW-0597">Phosphoprotein</keyword>
<keyword id="KW-1185">Reference proteome</keyword>
<keyword id="KW-0678">Repressor</keyword>
<keyword id="KW-0804">Transcription</keyword>
<keyword id="KW-0805">Transcription regulation</keyword>
<evidence type="ECO:0000250" key="1"/>
<evidence type="ECO:0000250" key="2">
    <source>
        <dbReference type="UniProtKB" id="P27699"/>
    </source>
</evidence>
<evidence type="ECO:0000250" key="3">
    <source>
        <dbReference type="UniProtKB" id="Q01147"/>
    </source>
</evidence>
<evidence type="ECO:0000250" key="4">
    <source>
        <dbReference type="UniProtKB" id="Q03060"/>
    </source>
</evidence>
<evidence type="ECO:0000255" key="5">
    <source>
        <dbReference type="PROSITE-ProRule" id="PRU00312"/>
    </source>
</evidence>
<evidence type="ECO:0000255" key="6">
    <source>
        <dbReference type="PROSITE-ProRule" id="PRU00978"/>
    </source>
</evidence>
<evidence type="ECO:0000256" key="7">
    <source>
        <dbReference type="SAM" id="MobiDB-lite"/>
    </source>
</evidence>
<evidence type="ECO:0000305" key="8"/>
<reference key="1">
    <citation type="submission" date="2005-03" db="EMBL/GenBank/DDBJ databases">
        <authorList>
            <person name="Staten N.R."/>
        </authorList>
    </citation>
    <scope>NUCLEOTIDE SEQUENCE [MRNA] OF 1-177 (ISOFORM TAU)</scope>
    <source>
        <strain>Beagle</strain>
        <tissue>Thymus</tissue>
    </source>
</reference>
<reference key="2">
    <citation type="journal article" date="1997" name="Biochem. Biophys. Res. Commun.">
        <title>Dog CREM transcription factors: cloning, tissue distribution, and identification of new isoforms.</title>
        <authorList>
            <person name="Uyttersprot N."/>
            <person name="Miot F."/>
        </authorList>
    </citation>
    <scope>NUCLEOTIDE SEQUENCE [MRNA] OF 17-360 (ISOFORM TAU)</scope>
    <scope>ALTERNATIVE SPLICING</scope>
    <source>
        <tissue>Thyroid</tissue>
    </source>
</reference>
<sequence>MSKCSRKKYIKTNLRQMTMDTMESQQDGSVTDSVAENESAHMQNQTGQNSIPTLTQVSVAGSGTGRGSPAVTLVQLPSGQTVHVQGIIQTPQPSVIQSPQIQTVQVATIAETDESAESEGVIDSHKRREILSRRPSYRKILNELSSDVPGVPKIEEEKSEEEGTPPNIATMAVPTSIYQTSTGQYIAIAQGGTIQISNPGSDGVQGLQALTMTNSGAPPPGATIVQYAAQSADGTQQFFVPGSQVVVQDEETELAPSHMAAATGDMPTYQIRAPTTALPQGVVMAASPGSLHSPQQLAEEATRKRELRLMKNREAARECRRKKKEYVKCLENRVAVLENQNKTLIEELKALKDLYCHKAE</sequence>
<protein>
    <recommendedName>
        <fullName>cAMP-responsive element modulator</fullName>
    </recommendedName>
</protein>
<name>CREM_CANLF</name>
<gene>
    <name type="primary">CREM</name>
</gene>
<accession>P79145</accession>
<proteinExistence type="evidence at transcript level"/>